<organism>
    <name type="scientific">Homo sapiens</name>
    <name type="common">Human</name>
    <dbReference type="NCBI Taxonomy" id="9606"/>
    <lineage>
        <taxon>Eukaryota</taxon>
        <taxon>Metazoa</taxon>
        <taxon>Chordata</taxon>
        <taxon>Craniata</taxon>
        <taxon>Vertebrata</taxon>
        <taxon>Euteleostomi</taxon>
        <taxon>Mammalia</taxon>
        <taxon>Eutheria</taxon>
        <taxon>Euarchontoglires</taxon>
        <taxon>Primates</taxon>
        <taxon>Haplorrhini</taxon>
        <taxon>Catarrhini</taxon>
        <taxon>Hominidae</taxon>
        <taxon>Homo</taxon>
    </lineage>
</organism>
<comment type="function">
    <text evidence="3 6 7 8">Component of the PeBoW complex, which is required for maturation of 28S and 5.8S ribosomal RNAs and formation of the 60S ribosome.</text>
</comment>
<comment type="subunit">
    <text evidence="2 3 5 6 7 8 9">Component of the PeBoW complex, composed of BOP1, PES1 and WDR12 (PubMed:16043514, PubMed:16738141, PubMed:17189298, PubMed:17353269). The complex is held together by BOP1, which interacts with PES1 via its N-terminal domain and with WDR12 via a high-affinity interaction between the seven-bladed beta-propeller domains of the 2 proteins. The PeBoW complex associates with the 66S pre-ribosome (By similarity). The PeBoW complex also associates with DDX27, PES1 interacts directly with DDX27 (PubMed:25825154). Interacts with IRS1 and UBTF. May interact with MAP1B (By similarity).</text>
</comment>
<comment type="interaction">
    <interactant intactId="EBI-1053271">
        <id>O00541</id>
    </interactant>
    <interactant intactId="EBI-930964">
        <id>P54253</id>
        <label>ATXN1</label>
    </interactant>
    <organismsDiffer>false</organismsDiffer>
    <experiments>3</experiments>
</comment>
<comment type="interaction">
    <interactant intactId="EBI-1053271">
        <id>O00541</id>
    </interactant>
    <interactant intactId="EBI-1050828">
        <id>Q14137</id>
        <label>BOP1</label>
    </interactant>
    <organismsDiffer>false</organismsDiffer>
    <experiments>6</experiments>
</comment>
<comment type="interaction">
    <interactant intactId="EBI-1053271">
        <id>O00541</id>
    </interactant>
    <interactant intactId="EBI-866480">
        <id>Q08050</id>
        <label>FOXM1</label>
    </interactant>
    <organismsDiffer>false</organismsDiffer>
    <experiments>2</experiments>
</comment>
<comment type="interaction">
    <interactant intactId="EBI-1053271">
        <id>O00541</id>
    </interactant>
    <interactant intactId="EBI-466029">
        <id>P42858</id>
        <label>HTT</label>
    </interactant>
    <organismsDiffer>false</organismsDiffer>
    <experiments>3</experiments>
</comment>
<comment type="interaction">
    <interactant intactId="EBI-1053271">
        <id>O00541</id>
    </interactant>
    <interactant intactId="EBI-2490660">
        <id>Q9GZL7</id>
        <label>WDR12</label>
    </interactant>
    <organismsDiffer>false</organismsDiffer>
    <experiments>7</experiments>
</comment>
<comment type="subcellular location">
    <subcellularLocation>
        <location>Nucleus</location>
        <location>Nucleolus</location>
    </subcellularLocation>
    <subcellularLocation>
        <location>Nucleus</location>
        <location>Nucleoplasm</location>
    </subcellularLocation>
    <subcellularLocation>
        <location>Chromosome</location>
    </subcellularLocation>
    <text evidence="3">Appears to localize to the periphery of metaphase chromosomes during mitosis and to the prenucleolar bodies that form in mitotic cells prior to the actual nucleoli.</text>
</comment>
<comment type="alternative products">
    <event type="alternative splicing"/>
    <isoform>
        <id>O00541-1</id>
        <name>1</name>
        <sequence type="displayed"/>
    </isoform>
    <isoform>
        <id>O00541-2</id>
        <name>2</name>
        <sequence type="described" ref="VSP_013023"/>
    </isoform>
</comment>
<comment type="tissue specificity">
    <text>Significant levels are detected in a variety of cancer cell lines, including glioblastoma, breast carcinoma, colon carcinoma and cervical carcinoma cells. Levels are abnormally elevated in malignant tumors of astrocytic origin.</text>
</comment>
<comment type="induction">
    <text evidence="5">By MYC.</text>
</comment>
<comment type="PTM">
    <text>Sumoylated.</text>
</comment>
<comment type="similarity">
    <text evidence="3">Belongs to the pescadillo family.</text>
</comment>
<gene>
    <name evidence="3" type="primary">PES1</name>
</gene>
<sequence length="588" mass="68003">MGGLEKKKYERGSATNYITRNKARKKLQLSLADFRRLCILKGIYPHEPKHKKKVNKGSTAARTFYLIKDIRFLLHEPIVNKFREYKVFVRKLRKAYGKSEWNTVERLKDNKPNYKLDHIIKERYPTFIDALRDLDDALSMCFLFSTFPRTGKCHVQTIQLCRRLTVEFMHYIIAARALRKVFLSIKGIYYQAEVLGQPIVWITPYAFSHDHPTDVDYRVMATFTEFYTTLLGFVNFRLYQLLNLHYPPKLEGQAQAEAKAGEGTYALDSESCMEKLAALSASLARVVVPATEEEAEVDEFPTDGEMSAQEEDRRKELEAQEKHKKLFEGLKFFLNREVPREALAFIIRSFGGEVSWDKSLCIGATYDVTDSRITHQIVDRPGQQTSVIGRCYVQPQWVFDSVNARLLLPVAEYFSGVQLPPHLSPFVTEKEGDYVPPEKLKLLALQRGEDPGNLNESEEEEEEDDNNEGDGDEEGENEEEEEDAEAGSEKEEEARLAALEEQRMEGKKPRVMAGTLKLEDKQRLAQEEESEAKRLAIMMMKKREKYLYQKIMFGKRRKIREANKLAEKRKAHDEAVRSEKKAKKARPE</sequence>
<feature type="chain" id="PRO_0000186188" description="Pescadillo homolog">
    <location>
        <begin position="1"/>
        <end position="588"/>
    </location>
</feature>
<feature type="domain" description="BRCT" evidence="3">
    <location>
        <begin position="322"/>
        <end position="415"/>
    </location>
</feature>
<feature type="region of interest" description="Sufficient for nucleolar localization">
    <location>
        <begin position="1"/>
        <end position="257"/>
    </location>
</feature>
<feature type="region of interest" description="Required for 28S ribosomal RNA processing">
    <location>
        <begin position="1"/>
        <end position="54"/>
    </location>
</feature>
<feature type="region of interest" description="Disordered" evidence="4">
    <location>
        <begin position="294"/>
        <end position="314"/>
    </location>
</feature>
<feature type="region of interest" description="Sufficient for interaction with MAP1B" evidence="1">
    <location>
        <begin position="306"/>
        <end position="415"/>
    </location>
</feature>
<feature type="region of interest" description="Disordered" evidence="4">
    <location>
        <begin position="448"/>
        <end position="515"/>
    </location>
</feature>
<feature type="region of interest" description="Required for 28S ribosomal RNA processing">
    <location>
        <begin position="539"/>
        <end position="588"/>
    </location>
</feature>
<feature type="region of interest" description="Disordered" evidence="4">
    <location>
        <begin position="565"/>
        <end position="588"/>
    </location>
</feature>
<feature type="compositionally biased region" description="Acidic residues" evidence="4">
    <location>
        <begin position="456"/>
        <end position="486"/>
    </location>
</feature>
<feature type="compositionally biased region" description="Basic and acidic residues" evidence="4">
    <location>
        <begin position="487"/>
        <end position="508"/>
    </location>
</feature>
<feature type="modified residue" description="N6-acetyllysine" evidence="11">
    <location>
        <position position="98"/>
    </location>
</feature>
<feature type="cross-link" description="Glycyl lysine isopeptide (Lys-Gly) (interchain with G-Cter in SUMO1); alternate" evidence="12">
    <location>
        <position position="517"/>
    </location>
</feature>
<feature type="cross-link" description="Glycyl lysine isopeptide (Lys-Gly) (interchain with G-Cter in SUMO2); alternate" evidence="12 13">
    <location>
        <position position="517"/>
    </location>
</feature>
<feature type="splice variant" id="VSP_013023" description="In isoform 2." evidence="10">
    <location>
        <begin position="306"/>
        <end position="310"/>
    </location>
</feature>
<feature type="sequence variant" id="VAR_034375" description="In dbSNP:rs42942.">
    <original>T</original>
    <variation>S</variation>
    <location>
        <position position="264"/>
    </location>
</feature>
<feature type="sequence variant" id="VAR_053570" description="In dbSNP:rs11541876.">
    <original>D</original>
    <variation>H</variation>
    <location>
        <position position="370"/>
    </location>
</feature>
<feature type="sequence variant" id="VAR_053571" description="In dbSNP:rs34123894.">
    <original>A</original>
    <variation>T</variation>
    <location>
        <position position="411"/>
    </location>
</feature>
<feature type="mutagenesis site" description="Reduces incorporation into the PeBoW complex and nucleolar localization and impairs maturation of 28S ribosomal RNA." evidence="7">
    <original>F</original>
    <variation>R</variation>
    <location>
        <position position="327"/>
    </location>
</feature>
<feature type="mutagenesis site" description="Reduces incorporation into the PeBoW complex and nucleolar localization and impairs maturation of 28S ribosomal RNA." evidence="7">
    <original>I</original>
    <variation>R</variation>
    <location>
        <position position="347"/>
    </location>
</feature>
<feature type="mutagenesis site" description="Slightly impairs nucleolar localization." evidence="7">
    <original>R</original>
    <variation>W</variation>
    <location>
        <position position="380"/>
    </location>
</feature>
<feature type="mutagenesis site" description="Reduces incorporation into the PeBoW complex and nucleolar localization and impairs maturation of 28S ribosomal RNA." evidence="7">
    <original>W</original>
    <variation>R</variation>
    <location>
        <position position="397"/>
    </location>
</feature>
<feature type="strand" evidence="14">
    <location>
        <begin position="331"/>
        <end position="333"/>
    </location>
</feature>
<feature type="strand" evidence="14">
    <location>
        <begin position="336"/>
        <end position="338"/>
    </location>
</feature>
<feature type="helix" evidence="14">
    <location>
        <begin position="340"/>
        <end position="349"/>
    </location>
</feature>
<feature type="strand" evidence="14">
    <location>
        <begin position="353"/>
        <end position="355"/>
    </location>
</feature>
<feature type="turn" evidence="14">
    <location>
        <begin position="358"/>
        <end position="360"/>
    </location>
</feature>
<feature type="strand" evidence="14">
    <location>
        <begin position="375"/>
        <end position="377"/>
    </location>
</feature>
<feature type="turn" evidence="14">
    <location>
        <begin position="381"/>
        <end position="383"/>
    </location>
</feature>
<feature type="strand" evidence="14">
    <location>
        <begin position="390"/>
        <end position="393"/>
    </location>
</feature>
<feature type="helix" evidence="14">
    <location>
        <begin position="396"/>
        <end position="404"/>
    </location>
</feature>
<feature type="turn" evidence="14">
    <location>
        <begin position="410"/>
        <end position="412"/>
    </location>
</feature>
<evidence type="ECO:0000250" key="1"/>
<evidence type="ECO:0000250" key="2">
    <source>
        <dbReference type="UniProtKB" id="Q9EQ61"/>
    </source>
</evidence>
<evidence type="ECO:0000255" key="3">
    <source>
        <dbReference type="HAMAP-Rule" id="MF_03028"/>
    </source>
</evidence>
<evidence type="ECO:0000256" key="4">
    <source>
        <dbReference type="SAM" id="MobiDB-lite"/>
    </source>
</evidence>
<evidence type="ECO:0000269" key="5">
    <source>
    </source>
</evidence>
<evidence type="ECO:0000269" key="6">
    <source>
    </source>
</evidence>
<evidence type="ECO:0000269" key="7">
    <source>
    </source>
</evidence>
<evidence type="ECO:0000269" key="8">
    <source>
    </source>
</evidence>
<evidence type="ECO:0000269" key="9">
    <source>
    </source>
</evidence>
<evidence type="ECO:0000303" key="10">
    <source>
    </source>
</evidence>
<evidence type="ECO:0007744" key="11">
    <source>
    </source>
</evidence>
<evidence type="ECO:0007744" key="12">
    <source>
    </source>
</evidence>
<evidence type="ECO:0007744" key="13">
    <source>
    </source>
</evidence>
<evidence type="ECO:0007829" key="14">
    <source>
        <dbReference type="PDB" id="2EP8"/>
    </source>
</evidence>
<protein>
    <recommendedName>
        <fullName evidence="3">Pescadillo homolog</fullName>
    </recommendedName>
</protein>
<dbReference type="EMBL" id="U78310">
    <property type="protein sequence ID" value="AAB61140.1"/>
    <property type="molecule type" value="mRNA"/>
</dbReference>
<dbReference type="EMBL" id="CR456539">
    <property type="protein sequence ID" value="CAG30425.1"/>
    <property type="molecule type" value="mRNA"/>
</dbReference>
<dbReference type="EMBL" id="AC005006">
    <property type="status" value="NOT_ANNOTATED_CDS"/>
    <property type="molecule type" value="Genomic_DNA"/>
</dbReference>
<dbReference type="EMBL" id="BC032489">
    <property type="protein sequence ID" value="AAH32489.1"/>
    <property type="molecule type" value="mRNA"/>
</dbReference>
<dbReference type="CCDS" id="CCDS13880.1">
    <molecule id="O00541-1"/>
</dbReference>
<dbReference type="CCDS" id="CCDS58802.1">
    <molecule id="O00541-2"/>
</dbReference>
<dbReference type="RefSeq" id="NP_001230154.1">
    <molecule id="O00541-2"/>
    <property type="nucleotide sequence ID" value="NM_001243225.2"/>
</dbReference>
<dbReference type="RefSeq" id="NP_055118.1">
    <molecule id="O00541-1"/>
    <property type="nucleotide sequence ID" value="NM_014303.4"/>
</dbReference>
<dbReference type="PDB" id="2EP8">
    <property type="method" value="NMR"/>
    <property type="chains" value="A=322-414"/>
</dbReference>
<dbReference type="PDB" id="8FKP">
    <property type="method" value="EM"/>
    <property type="resolution" value="2.85 A"/>
    <property type="chains" value="SM=1-588"/>
</dbReference>
<dbReference type="PDB" id="8FKQ">
    <property type="method" value="EM"/>
    <property type="resolution" value="2.76 A"/>
    <property type="chains" value="SM=1-588"/>
</dbReference>
<dbReference type="PDB" id="8FKR">
    <property type="method" value="EM"/>
    <property type="resolution" value="2.89 A"/>
    <property type="chains" value="SM=1-588"/>
</dbReference>
<dbReference type="PDB" id="8FKS">
    <property type="method" value="EM"/>
    <property type="resolution" value="2.88 A"/>
    <property type="chains" value="SM=1-588"/>
</dbReference>
<dbReference type="PDB" id="8FKT">
    <property type="method" value="EM"/>
    <property type="resolution" value="2.81 A"/>
    <property type="chains" value="SM=1-588"/>
</dbReference>
<dbReference type="PDB" id="8FKU">
    <property type="method" value="EM"/>
    <property type="resolution" value="2.82 A"/>
    <property type="chains" value="SM=1-588"/>
</dbReference>
<dbReference type="PDB" id="8FKV">
    <property type="method" value="EM"/>
    <property type="resolution" value="2.47 A"/>
    <property type="chains" value="SM=1-588"/>
</dbReference>
<dbReference type="PDB" id="8FKW">
    <property type="method" value="EM"/>
    <property type="resolution" value="2.50 A"/>
    <property type="chains" value="SM=1-588"/>
</dbReference>
<dbReference type="PDB" id="8FKX">
    <property type="method" value="EM"/>
    <property type="resolution" value="2.59 A"/>
    <property type="chains" value="SM=1-588"/>
</dbReference>
<dbReference type="PDB" id="8FKY">
    <property type="method" value="EM"/>
    <property type="resolution" value="2.67 A"/>
    <property type="chains" value="SM=1-588"/>
</dbReference>
<dbReference type="PDB" id="8FKZ">
    <property type="method" value="EM"/>
    <property type="resolution" value="3.04 A"/>
    <property type="chains" value="SM=1-588"/>
</dbReference>
<dbReference type="PDB" id="8FL2">
    <property type="method" value="EM"/>
    <property type="resolution" value="2.67 A"/>
    <property type="chains" value="SM=1-588"/>
</dbReference>
<dbReference type="PDB" id="8FL3">
    <property type="method" value="EM"/>
    <property type="resolution" value="2.53 A"/>
    <property type="chains" value="SM=1-588"/>
</dbReference>
<dbReference type="PDB" id="8FL4">
    <property type="method" value="EM"/>
    <property type="resolution" value="2.89 A"/>
    <property type="chains" value="SM=1-588"/>
</dbReference>
<dbReference type="PDB" id="8FL6">
    <property type="method" value="EM"/>
    <property type="resolution" value="2.62 A"/>
    <property type="chains" value="SM=1-588"/>
</dbReference>
<dbReference type="PDB" id="8FL7">
    <property type="method" value="EM"/>
    <property type="resolution" value="2.55 A"/>
    <property type="chains" value="SM=1-588"/>
</dbReference>
<dbReference type="PDB" id="8FLA">
    <property type="method" value="EM"/>
    <property type="resolution" value="2.63 A"/>
    <property type="chains" value="SM=1-588"/>
</dbReference>
<dbReference type="PDB" id="8FLB">
    <property type="method" value="EM"/>
    <property type="resolution" value="2.55 A"/>
    <property type="chains" value="SM=1-588"/>
</dbReference>
<dbReference type="PDB" id="8FLD">
    <property type="method" value="EM"/>
    <property type="resolution" value="2.58 A"/>
    <property type="chains" value="SM=1-588"/>
</dbReference>
<dbReference type="PDB" id="8FLE">
    <property type="method" value="EM"/>
    <property type="resolution" value="2.48 A"/>
    <property type="chains" value="SM=1-588"/>
</dbReference>
<dbReference type="PDB" id="8INE">
    <property type="method" value="EM"/>
    <property type="resolution" value="3.20 A"/>
    <property type="chains" value="v=1-588"/>
</dbReference>
<dbReference type="PDB" id="8INF">
    <property type="method" value="EM"/>
    <property type="resolution" value="3.00 A"/>
    <property type="chains" value="v=1-588"/>
</dbReference>
<dbReference type="PDB" id="8IPX">
    <property type="method" value="EM"/>
    <property type="resolution" value="4.30 A"/>
    <property type="chains" value="q=1-588"/>
</dbReference>
<dbReference type="PDB" id="8IPY">
    <property type="method" value="EM"/>
    <property type="resolution" value="3.20 A"/>
    <property type="chains" value="q=1-588"/>
</dbReference>
<dbReference type="PDB" id="8IR3">
    <property type="method" value="EM"/>
    <property type="resolution" value="3.50 A"/>
    <property type="chains" value="q=1-588"/>
</dbReference>
<dbReference type="PDBsum" id="2EP8"/>
<dbReference type="PDBsum" id="8FKP"/>
<dbReference type="PDBsum" id="8FKQ"/>
<dbReference type="PDBsum" id="8FKR"/>
<dbReference type="PDBsum" id="8FKS"/>
<dbReference type="PDBsum" id="8FKT"/>
<dbReference type="PDBsum" id="8FKU"/>
<dbReference type="PDBsum" id="8FKV"/>
<dbReference type="PDBsum" id="8FKW"/>
<dbReference type="PDBsum" id="8FKX"/>
<dbReference type="PDBsum" id="8FKY"/>
<dbReference type="PDBsum" id="8FKZ"/>
<dbReference type="PDBsum" id="8FL2"/>
<dbReference type="PDBsum" id="8FL3"/>
<dbReference type="PDBsum" id="8FL4"/>
<dbReference type="PDBsum" id="8FL6"/>
<dbReference type="PDBsum" id="8FL7"/>
<dbReference type="PDBsum" id="8FLA"/>
<dbReference type="PDBsum" id="8FLB"/>
<dbReference type="PDBsum" id="8FLD"/>
<dbReference type="PDBsum" id="8FLE"/>
<dbReference type="PDBsum" id="8INE"/>
<dbReference type="PDBsum" id="8INF"/>
<dbReference type="PDBsum" id="8IPX"/>
<dbReference type="PDBsum" id="8IPY"/>
<dbReference type="PDBsum" id="8IR3"/>
<dbReference type="EMDB" id="EMD-29252"/>
<dbReference type="EMDB" id="EMD-29253"/>
<dbReference type="EMDB" id="EMD-29254"/>
<dbReference type="EMDB" id="EMD-29255"/>
<dbReference type="EMDB" id="EMD-29256"/>
<dbReference type="EMDB" id="EMD-29257"/>
<dbReference type="EMDB" id="EMD-29258"/>
<dbReference type="EMDB" id="EMD-29259"/>
<dbReference type="EMDB" id="EMD-29260"/>
<dbReference type="EMDB" id="EMD-29261"/>
<dbReference type="EMDB" id="EMD-29262"/>
<dbReference type="EMDB" id="EMD-29265"/>
<dbReference type="EMDB" id="EMD-29266"/>
<dbReference type="EMDB" id="EMD-29267"/>
<dbReference type="EMDB" id="EMD-29268"/>
<dbReference type="EMDB" id="EMD-29269"/>
<dbReference type="EMDB" id="EMD-29272"/>
<dbReference type="EMDB" id="EMD-29273"/>
<dbReference type="EMDB" id="EMD-29275"/>
<dbReference type="EMDB" id="EMD-29276"/>
<dbReference type="EMDB" id="EMD-35596"/>
<dbReference type="EMDB" id="EMD-35597"/>
<dbReference type="EMDB" id="EMD-35649"/>
<dbReference type="EMDB" id="EMD-35651"/>
<dbReference type="EMDB" id="EMD-35673"/>
<dbReference type="SMR" id="O00541"/>
<dbReference type="BioGRID" id="117040">
    <property type="interactions" value="269"/>
</dbReference>
<dbReference type="ComplexPortal" id="CPX-2846">
    <property type="entry name" value="PeBoW complex"/>
</dbReference>
<dbReference type="CORUM" id="O00541"/>
<dbReference type="FunCoup" id="O00541">
    <property type="interactions" value="3464"/>
</dbReference>
<dbReference type="IntAct" id="O00541">
    <property type="interactions" value="97"/>
</dbReference>
<dbReference type="MINT" id="O00541"/>
<dbReference type="STRING" id="9606.ENSP00000346725"/>
<dbReference type="GlyGen" id="O00541">
    <property type="glycosylation" value="1 site, 1 O-linked glycan (1 site)"/>
</dbReference>
<dbReference type="iPTMnet" id="O00541"/>
<dbReference type="PhosphoSitePlus" id="O00541"/>
<dbReference type="SwissPalm" id="O00541"/>
<dbReference type="BioMuta" id="PES1"/>
<dbReference type="CPTAC" id="CPTAC-1171"/>
<dbReference type="CPTAC" id="CPTAC-1193"/>
<dbReference type="jPOST" id="O00541"/>
<dbReference type="MassIVE" id="O00541"/>
<dbReference type="PaxDb" id="9606-ENSP00000346725"/>
<dbReference type="PeptideAtlas" id="O00541"/>
<dbReference type="ProteomicsDB" id="47963">
    <molecule id="O00541-1"/>
</dbReference>
<dbReference type="ProteomicsDB" id="47964">
    <molecule id="O00541-2"/>
</dbReference>
<dbReference type="Pumba" id="O00541"/>
<dbReference type="Antibodypedia" id="10811">
    <property type="antibodies" value="262 antibodies from 32 providers"/>
</dbReference>
<dbReference type="DNASU" id="23481"/>
<dbReference type="Ensembl" id="ENST00000335214.8">
    <molecule id="O00541-2"/>
    <property type="protein sequence ID" value="ENSP00000334612.6"/>
    <property type="gene ID" value="ENSG00000100029.18"/>
</dbReference>
<dbReference type="Ensembl" id="ENST00000354694.12">
    <molecule id="O00541-1"/>
    <property type="protein sequence ID" value="ENSP00000346725.6"/>
    <property type="gene ID" value="ENSG00000100029.18"/>
</dbReference>
<dbReference type="GeneID" id="23481"/>
<dbReference type="KEGG" id="hsa:23481"/>
<dbReference type="MANE-Select" id="ENST00000354694.12">
    <property type="protein sequence ID" value="ENSP00000346725.6"/>
    <property type="RefSeq nucleotide sequence ID" value="NM_014303.4"/>
    <property type="RefSeq protein sequence ID" value="NP_055118.1"/>
</dbReference>
<dbReference type="UCSC" id="uc003aij.2">
    <molecule id="O00541-1"/>
    <property type="organism name" value="human"/>
</dbReference>
<dbReference type="AGR" id="HGNC:8848"/>
<dbReference type="CTD" id="23481"/>
<dbReference type="DisGeNET" id="23481"/>
<dbReference type="GeneCards" id="PES1"/>
<dbReference type="HGNC" id="HGNC:8848">
    <property type="gene designation" value="PES1"/>
</dbReference>
<dbReference type="HPA" id="ENSG00000100029">
    <property type="expression patterns" value="Low tissue specificity"/>
</dbReference>
<dbReference type="MIM" id="605819">
    <property type="type" value="gene"/>
</dbReference>
<dbReference type="neXtProt" id="NX_O00541"/>
<dbReference type="OpenTargets" id="ENSG00000100029"/>
<dbReference type="PharmGKB" id="PA33190"/>
<dbReference type="VEuPathDB" id="HostDB:ENSG00000100029"/>
<dbReference type="eggNOG" id="KOG2481">
    <property type="taxonomic scope" value="Eukaryota"/>
</dbReference>
<dbReference type="GeneTree" id="ENSGT00390000002626"/>
<dbReference type="HOGENOM" id="CLU_019619_0_0_1"/>
<dbReference type="InParanoid" id="O00541"/>
<dbReference type="OMA" id="QKVTWIV"/>
<dbReference type="OrthoDB" id="10264910at2759"/>
<dbReference type="PAN-GO" id="O00541">
    <property type="GO annotations" value="3 GO annotations based on evolutionary models"/>
</dbReference>
<dbReference type="PhylomeDB" id="O00541"/>
<dbReference type="TreeFam" id="TF300671"/>
<dbReference type="PathwayCommons" id="O00541"/>
<dbReference type="Reactome" id="R-HSA-6791226">
    <property type="pathway name" value="Major pathway of rRNA processing in the nucleolus and cytosol"/>
</dbReference>
<dbReference type="SignaLink" id="O00541"/>
<dbReference type="SIGNOR" id="O00541"/>
<dbReference type="BioGRID-ORCS" id="23481">
    <property type="hits" value="807 hits in 1156 CRISPR screens"/>
</dbReference>
<dbReference type="CD-CODE" id="232F8A39">
    <property type="entry name" value="P-body"/>
</dbReference>
<dbReference type="CD-CODE" id="91857CE7">
    <property type="entry name" value="Nucleolus"/>
</dbReference>
<dbReference type="ChiTaRS" id="PES1">
    <property type="organism name" value="human"/>
</dbReference>
<dbReference type="EvolutionaryTrace" id="O00541"/>
<dbReference type="GeneWiki" id="PES1"/>
<dbReference type="GenomeRNAi" id="23481"/>
<dbReference type="Pharos" id="O00541">
    <property type="development level" value="Tbio"/>
</dbReference>
<dbReference type="PRO" id="PR:O00541"/>
<dbReference type="Proteomes" id="UP000005640">
    <property type="component" value="Chromosome 22"/>
</dbReference>
<dbReference type="RNAct" id="O00541">
    <property type="molecule type" value="protein"/>
</dbReference>
<dbReference type="Bgee" id="ENSG00000100029">
    <property type="expression patterns" value="Expressed in sural nerve and 176 other cell types or tissues"/>
</dbReference>
<dbReference type="ExpressionAtlas" id="O00541">
    <property type="expression patterns" value="baseline and differential"/>
</dbReference>
<dbReference type="GO" id="GO:0005694">
    <property type="term" value="C:chromosome"/>
    <property type="evidence" value="ECO:0000314"/>
    <property type="project" value="HPA"/>
</dbReference>
<dbReference type="GO" id="GO:0005829">
    <property type="term" value="C:cytosol"/>
    <property type="evidence" value="ECO:0000314"/>
    <property type="project" value="HPA"/>
</dbReference>
<dbReference type="GO" id="GO:0016020">
    <property type="term" value="C:membrane"/>
    <property type="evidence" value="ECO:0007005"/>
    <property type="project" value="UniProtKB"/>
</dbReference>
<dbReference type="GO" id="GO:0005730">
    <property type="term" value="C:nucleolus"/>
    <property type="evidence" value="ECO:0000314"/>
    <property type="project" value="HPA"/>
</dbReference>
<dbReference type="GO" id="GO:0005654">
    <property type="term" value="C:nucleoplasm"/>
    <property type="evidence" value="ECO:0000314"/>
    <property type="project" value="HPA"/>
</dbReference>
<dbReference type="GO" id="GO:0070545">
    <property type="term" value="C:PeBoW complex"/>
    <property type="evidence" value="ECO:0000314"/>
    <property type="project" value="UniProtKB"/>
</dbReference>
<dbReference type="GO" id="GO:0030687">
    <property type="term" value="C:preribosome, large subunit precursor"/>
    <property type="evidence" value="ECO:0000314"/>
    <property type="project" value="UniProtKB"/>
</dbReference>
<dbReference type="GO" id="GO:0043021">
    <property type="term" value="F:ribonucleoprotein complex binding"/>
    <property type="evidence" value="ECO:0007669"/>
    <property type="project" value="UniProtKB-UniRule"/>
</dbReference>
<dbReference type="GO" id="GO:0003723">
    <property type="term" value="F:RNA binding"/>
    <property type="evidence" value="ECO:0007005"/>
    <property type="project" value="UniProtKB"/>
</dbReference>
<dbReference type="GO" id="GO:0008283">
    <property type="term" value="P:cell population proliferation"/>
    <property type="evidence" value="ECO:0000315"/>
    <property type="project" value="MGI"/>
</dbReference>
<dbReference type="GO" id="GO:0000466">
    <property type="term" value="P:maturation of 5.8S rRNA from tricistronic rRNA transcript (SSU-rRNA, 5.8S rRNA, LSU-rRNA)"/>
    <property type="evidence" value="ECO:0000315"/>
    <property type="project" value="UniProtKB"/>
</dbReference>
<dbReference type="GO" id="GO:0000463">
    <property type="term" value="P:maturation of LSU-rRNA from tricistronic rRNA transcript (SSU-rRNA, 5.8S rRNA, LSU-rRNA)"/>
    <property type="evidence" value="ECO:0000315"/>
    <property type="project" value="UniProtKB"/>
</dbReference>
<dbReference type="GO" id="GO:0051726">
    <property type="term" value="P:regulation of cell cycle"/>
    <property type="evidence" value="ECO:0000315"/>
    <property type="project" value="UniProtKB"/>
</dbReference>
<dbReference type="GO" id="GO:0042273">
    <property type="term" value="P:ribosomal large subunit biogenesis"/>
    <property type="evidence" value="ECO:0000305"/>
    <property type="project" value="UniProtKB"/>
</dbReference>
<dbReference type="GO" id="GO:0006364">
    <property type="term" value="P:rRNA processing"/>
    <property type="evidence" value="ECO:0000315"/>
    <property type="project" value="MGI"/>
</dbReference>
<dbReference type="CDD" id="cd17709">
    <property type="entry name" value="BRCT_pescadillo_like"/>
    <property type="match status" value="1"/>
</dbReference>
<dbReference type="FunFam" id="3.40.50.10190:FF:000002">
    <property type="entry name" value="Pescadillo homolog"/>
    <property type="match status" value="1"/>
</dbReference>
<dbReference type="Gene3D" id="3.40.50.10190">
    <property type="entry name" value="BRCT domain"/>
    <property type="match status" value="1"/>
</dbReference>
<dbReference type="HAMAP" id="MF_03028">
    <property type="entry name" value="Pescadillo"/>
    <property type="match status" value="1"/>
</dbReference>
<dbReference type="InterPro" id="IPR001357">
    <property type="entry name" value="BRCT_dom"/>
</dbReference>
<dbReference type="InterPro" id="IPR036420">
    <property type="entry name" value="BRCT_dom_sf"/>
</dbReference>
<dbReference type="InterPro" id="IPR010613">
    <property type="entry name" value="PES"/>
</dbReference>
<dbReference type="PANTHER" id="PTHR12221">
    <property type="entry name" value="PESCADILLO - RELATED"/>
    <property type="match status" value="1"/>
</dbReference>
<dbReference type="PANTHER" id="PTHR12221:SF8">
    <property type="entry name" value="PESCADILLO HOMOLOG"/>
    <property type="match status" value="1"/>
</dbReference>
<dbReference type="Pfam" id="PF16589">
    <property type="entry name" value="BRCT_2"/>
    <property type="match status" value="1"/>
</dbReference>
<dbReference type="Pfam" id="PF06732">
    <property type="entry name" value="Pescadillo_N"/>
    <property type="match status" value="1"/>
</dbReference>
<dbReference type="SMART" id="SM00292">
    <property type="entry name" value="BRCT"/>
    <property type="match status" value="1"/>
</dbReference>
<dbReference type="SUPFAM" id="SSF52113">
    <property type="entry name" value="BRCT domain"/>
    <property type="match status" value="1"/>
</dbReference>
<dbReference type="PROSITE" id="PS50172">
    <property type="entry name" value="BRCT"/>
    <property type="match status" value="1"/>
</dbReference>
<proteinExistence type="evidence at protein level"/>
<accession>O00541</accession>
<accession>Q6IC29</accession>
<keyword id="KW-0002">3D-structure</keyword>
<keyword id="KW-0007">Acetylation</keyword>
<keyword id="KW-0025">Alternative splicing</keyword>
<keyword id="KW-0158">Chromosome</keyword>
<keyword id="KW-1017">Isopeptide bond</keyword>
<keyword id="KW-0539">Nucleus</keyword>
<keyword id="KW-1267">Proteomics identification</keyword>
<keyword id="KW-1185">Reference proteome</keyword>
<keyword id="KW-0690">Ribosome biogenesis</keyword>
<keyword id="KW-0698">rRNA processing</keyword>
<keyword id="KW-0832">Ubl conjugation</keyword>
<reference key="1">
    <citation type="journal article" date="1996" name="Genes Dev.">
        <title>Insertional mutagenesis in zebrafish identifies two novel genes, pescadillo and dead eye, essential for embryonic development.</title>
        <authorList>
            <person name="Allende M.L."/>
            <person name="Amsterdam A."/>
            <person name="Becker T."/>
            <person name="Kawakami K."/>
            <person name="Gaiano N."/>
            <person name="Hopkins N."/>
        </authorList>
    </citation>
    <scope>NUCLEOTIDE SEQUENCE [MRNA]</scope>
</reference>
<reference key="2">
    <citation type="journal article" date="2004" name="Genome Biol.">
        <title>A genome annotation-driven approach to cloning the human ORFeome.</title>
        <authorList>
            <person name="Collins J.E."/>
            <person name="Wright C.L."/>
            <person name="Edwards C.A."/>
            <person name="Davis M.P."/>
            <person name="Grinham J.A."/>
            <person name="Cole C.G."/>
            <person name="Goward M.E."/>
            <person name="Aguado B."/>
            <person name="Mallya M."/>
            <person name="Mokrab Y."/>
            <person name="Huckle E.J."/>
            <person name="Beare D.M."/>
            <person name="Dunham I."/>
        </authorList>
    </citation>
    <scope>NUCLEOTIDE SEQUENCE [LARGE SCALE MRNA] (ISOFORM 2)</scope>
</reference>
<reference key="3">
    <citation type="journal article" date="1999" name="Nature">
        <title>The DNA sequence of human chromosome 22.</title>
        <authorList>
            <person name="Dunham I."/>
            <person name="Hunt A.R."/>
            <person name="Collins J.E."/>
            <person name="Bruskiewich R."/>
            <person name="Beare D.M."/>
            <person name="Clamp M."/>
            <person name="Smink L.J."/>
            <person name="Ainscough R."/>
            <person name="Almeida J.P."/>
            <person name="Babbage A.K."/>
            <person name="Bagguley C."/>
            <person name="Bailey J."/>
            <person name="Barlow K.F."/>
            <person name="Bates K.N."/>
            <person name="Beasley O.P."/>
            <person name="Bird C.P."/>
            <person name="Blakey S.E."/>
            <person name="Bridgeman A.M."/>
            <person name="Buck D."/>
            <person name="Burgess J."/>
            <person name="Burrill W.D."/>
            <person name="Burton J."/>
            <person name="Carder C."/>
            <person name="Carter N.P."/>
            <person name="Chen Y."/>
            <person name="Clark G."/>
            <person name="Clegg S.M."/>
            <person name="Cobley V.E."/>
            <person name="Cole C.G."/>
            <person name="Collier R.E."/>
            <person name="Connor R."/>
            <person name="Conroy D."/>
            <person name="Corby N.R."/>
            <person name="Coville G.J."/>
            <person name="Cox A.V."/>
            <person name="Davis J."/>
            <person name="Dawson E."/>
            <person name="Dhami P.D."/>
            <person name="Dockree C."/>
            <person name="Dodsworth S.J."/>
            <person name="Durbin R.M."/>
            <person name="Ellington A.G."/>
            <person name="Evans K.L."/>
            <person name="Fey J.M."/>
            <person name="Fleming K."/>
            <person name="French L."/>
            <person name="Garner A.A."/>
            <person name="Gilbert J.G.R."/>
            <person name="Goward M.E."/>
            <person name="Grafham D.V."/>
            <person name="Griffiths M.N.D."/>
            <person name="Hall C."/>
            <person name="Hall R.E."/>
            <person name="Hall-Tamlyn G."/>
            <person name="Heathcott R.W."/>
            <person name="Ho S."/>
            <person name="Holmes S."/>
            <person name="Hunt S.E."/>
            <person name="Jones M.C."/>
            <person name="Kershaw J."/>
            <person name="Kimberley A.M."/>
            <person name="King A."/>
            <person name="Laird G.K."/>
            <person name="Langford C.F."/>
            <person name="Leversha M.A."/>
            <person name="Lloyd C."/>
            <person name="Lloyd D.M."/>
            <person name="Martyn I.D."/>
            <person name="Mashreghi-Mohammadi M."/>
            <person name="Matthews L.H."/>
            <person name="Mccann O.T."/>
            <person name="Mcclay J."/>
            <person name="Mclaren S."/>
            <person name="McMurray A.A."/>
            <person name="Milne S.A."/>
            <person name="Mortimore B.J."/>
            <person name="Odell C.N."/>
            <person name="Pavitt R."/>
            <person name="Pearce A.V."/>
            <person name="Pearson D."/>
            <person name="Phillimore B.J.C.T."/>
            <person name="Phillips S.H."/>
            <person name="Plumb R.W."/>
            <person name="Ramsay H."/>
            <person name="Ramsey Y."/>
            <person name="Rogers L."/>
            <person name="Ross M.T."/>
            <person name="Scott C.E."/>
            <person name="Sehra H.K."/>
            <person name="Skuce C.D."/>
            <person name="Smalley S."/>
            <person name="Smith M.L."/>
            <person name="Soderlund C."/>
            <person name="Spragon L."/>
            <person name="Steward C.A."/>
            <person name="Sulston J.E."/>
            <person name="Swann R.M."/>
            <person name="Vaudin M."/>
            <person name="Wall M."/>
            <person name="Wallis J.M."/>
            <person name="Whiteley M.N."/>
            <person name="Willey D.L."/>
            <person name="Williams L."/>
            <person name="Williams S.A."/>
            <person name="Williamson H."/>
            <person name="Wilmer T.E."/>
            <person name="Wilming L."/>
            <person name="Wright C.L."/>
            <person name="Hubbard T."/>
            <person name="Bentley D.R."/>
            <person name="Beck S."/>
            <person name="Rogers J."/>
            <person name="Shimizu N."/>
            <person name="Minoshima S."/>
            <person name="Kawasaki K."/>
            <person name="Sasaki T."/>
            <person name="Asakawa S."/>
            <person name="Kudoh J."/>
            <person name="Shintani A."/>
            <person name="Shibuya K."/>
            <person name="Yoshizaki Y."/>
            <person name="Aoki N."/>
            <person name="Mitsuyama S."/>
            <person name="Roe B.A."/>
            <person name="Chen F."/>
            <person name="Chu L."/>
            <person name="Crabtree J."/>
            <person name="Deschamps S."/>
            <person name="Do A."/>
            <person name="Do T."/>
            <person name="Dorman A."/>
            <person name="Fang F."/>
            <person name="Fu Y."/>
            <person name="Hu P."/>
            <person name="Hua A."/>
            <person name="Kenton S."/>
            <person name="Lai H."/>
            <person name="Lao H.I."/>
            <person name="Lewis J."/>
            <person name="Lewis S."/>
            <person name="Lin S.-P."/>
            <person name="Loh P."/>
            <person name="Malaj E."/>
            <person name="Nguyen T."/>
            <person name="Pan H."/>
            <person name="Phan S."/>
            <person name="Qi S."/>
            <person name="Qian Y."/>
            <person name="Ray L."/>
            <person name="Ren Q."/>
            <person name="Shaull S."/>
            <person name="Sloan D."/>
            <person name="Song L."/>
            <person name="Wang Q."/>
            <person name="Wang Y."/>
            <person name="Wang Z."/>
            <person name="White J."/>
            <person name="Willingham D."/>
            <person name="Wu H."/>
            <person name="Yao Z."/>
            <person name="Zhan M."/>
            <person name="Zhang G."/>
            <person name="Chissoe S."/>
            <person name="Murray J."/>
            <person name="Miller N."/>
            <person name="Minx P."/>
            <person name="Fulton R."/>
            <person name="Johnson D."/>
            <person name="Bemis G."/>
            <person name="Bentley D."/>
            <person name="Bradshaw H."/>
            <person name="Bourne S."/>
            <person name="Cordes M."/>
            <person name="Du Z."/>
            <person name="Fulton L."/>
            <person name="Goela D."/>
            <person name="Graves T."/>
            <person name="Hawkins J."/>
            <person name="Hinds K."/>
            <person name="Kemp K."/>
            <person name="Latreille P."/>
            <person name="Layman D."/>
            <person name="Ozersky P."/>
            <person name="Rohlfing T."/>
            <person name="Scheet P."/>
            <person name="Walker C."/>
            <person name="Wamsley A."/>
            <person name="Wohldmann P."/>
            <person name="Pepin K."/>
            <person name="Nelson J."/>
            <person name="Korf I."/>
            <person name="Bedell J.A."/>
            <person name="Hillier L.W."/>
            <person name="Mardis E."/>
            <person name="Waterston R."/>
            <person name="Wilson R."/>
            <person name="Emanuel B.S."/>
            <person name="Shaikh T."/>
            <person name="Kurahashi H."/>
            <person name="Saitta S."/>
            <person name="Budarf M.L."/>
            <person name="McDermid H.E."/>
            <person name="Johnson A."/>
            <person name="Wong A.C.C."/>
            <person name="Morrow B.E."/>
            <person name="Edelmann L."/>
            <person name="Kim U.J."/>
            <person name="Shizuya H."/>
            <person name="Simon M.I."/>
            <person name="Dumanski J.P."/>
            <person name="Peyrard M."/>
            <person name="Kedra D."/>
            <person name="Seroussi E."/>
            <person name="Fransson I."/>
            <person name="Tapia I."/>
            <person name="Bruder C.E."/>
            <person name="O'Brien K.P."/>
            <person name="Wilkinson P."/>
            <person name="Bodenteich A."/>
            <person name="Hartman K."/>
            <person name="Hu X."/>
            <person name="Khan A.S."/>
            <person name="Lane L."/>
            <person name="Tilahun Y."/>
            <person name="Wright H."/>
        </authorList>
    </citation>
    <scope>NUCLEOTIDE SEQUENCE [LARGE SCALE GENOMIC DNA]</scope>
</reference>
<reference key="4">
    <citation type="journal article" date="2004" name="Genome Res.">
        <title>The status, quality, and expansion of the NIH full-length cDNA project: the Mammalian Gene Collection (MGC).</title>
        <authorList>
            <consortium name="The MGC Project Team"/>
        </authorList>
    </citation>
    <scope>NUCLEOTIDE SEQUENCE [LARGE SCALE MRNA] (ISOFORM 1)</scope>
    <source>
        <tissue>Mammary gland</tissue>
    </source>
</reference>
<reference key="5">
    <citation type="journal article" date="2001" name="J. Biol. Chem.">
        <title>Pescadillo, a novel cell cycle regulatory protein abnormally expressed in malignant cells.</title>
        <authorList>
            <person name="Kinoshita Y."/>
            <person name="Jarell A.D."/>
            <person name="Flaman J.-M."/>
            <person name="Foltz G."/>
            <person name="Schuster J."/>
            <person name="Sopher B.L."/>
            <person name="Irvin D.K."/>
            <person name="Kanning K."/>
            <person name="Kornblum H.I."/>
            <person name="Nelson P.S."/>
            <person name="Hieter P."/>
            <person name="Morrison R.S."/>
        </authorList>
    </citation>
    <scope>CHARACTERIZATION</scope>
</reference>
<reference key="6">
    <citation type="journal article" date="2002" name="RNA">
        <title>Yeast Pescadillo is required for multiple activities during 60S ribosomal subunit synthesis.</title>
        <authorList>
            <person name="Oeffinger M."/>
            <person name="Leung A."/>
            <person name="Lamond A."/>
            <person name="Tollervey D."/>
        </authorList>
    </citation>
    <scope>SUBCELLULAR LOCATION</scope>
</reference>
<reference key="7">
    <citation type="journal article" date="2002" name="RNA">
        <authorList>
            <person name="Oeffinger M."/>
            <person name="Leung A."/>
            <person name="Lamond A."/>
            <person name="Tollervey D."/>
        </authorList>
    </citation>
    <scope>ERRATUM OF PUBMED:12022229</scope>
</reference>
<reference key="8">
    <citation type="journal article" date="2002" name="Mol. Biol. Cell">
        <title>Functional proteomic analysis of human nucleolus.</title>
        <authorList>
            <person name="Scherl A."/>
            <person name="Coute Y."/>
            <person name="Deon C."/>
            <person name="Calle A."/>
            <person name="Kindbeiter K."/>
            <person name="Sanchez J.-C."/>
            <person name="Greco A."/>
            <person name="Hochstrasser D.F."/>
            <person name="Diaz J.-J."/>
        </authorList>
    </citation>
    <scope>SUBCELLULAR LOCATION [LARGE SCALE ANALYSIS]</scope>
    <source>
        <tissue>Cervix carcinoma</tissue>
    </source>
</reference>
<reference key="9">
    <citation type="journal article" date="2005" name="J. Cell Biol.">
        <title>Mammalian WDR12 is a novel member of the Pes1-Bop1 complex and is required for ribosome biogenesis and cell proliferation.</title>
        <authorList>
            <person name="Hoelzel M."/>
            <person name="Rohrmoser M."/>
            <person name="Schlee M."/>
            <person name="Grimm T."/>
            <person name="Harasim T."/>
            <person name="Malamoussi A."/>
            <person name="Gruber-Eber A."/>
            <person name="Kremmer E."/>
            <person name="Hiddemann W."/>
            <person name="Bornkamm G.W."/>
            <person name="Eick D."/>
        </authorList>
    </citation>
    <scope>INTERACTION WITH BOP1 AND WDR12</scope>
    <scope>INDUCTION</scope>
</reference>
<reference key="10">
    <citation type="journal article" date="2006" name="Nucleic Acids Res.">
        <title>Dominant-negative Pes1 mutants inhibit ribosomal RNA processing and cell proliferation via incorporation into the PeBoW-complex.</title>
        <authorList>
            <person name="Grimm T."/>
            <person name="Hoelzel M."/>
            <person name="Rohrmoser M."/>
            <person name="Harasim T."/>
            <person name="Malamoussi A."/>
            <person name="Gruber-Eber A."/>
            <person name="Kremmer E."/>
            <person name="Eick D."/>
        </authorList>
    </citation>
    <scope>FUNCTION</scope>
    <scope>INTERACTION WITH BOP1 AND WDR12</scope>
    <scope>SUBCELLULAR LOCATION</scope>
</reference>
<reference key="11">
    <citation type="journal article" date="2007" name="Mol. Cell. Biol.">
        <title>Interdependence of Pes1, Bop1, and WDR12 controls nucleolar localization and assembly of the PeBoW complex required for maturation of the 60S ribosomal subunit.</title>
        <authorList>
            <person name="Rohrmoser M."/>
            <person name="Hoelzel M."/>
            <person name="Grimm T."/>
            <person name="Malamoussi A."/>
            <person name="Harasim T."/>
            <person name="Orban M."/>
            <person name="Pfisterer I."/>
            <person name="Gruber-Eber A."/>
            <person name="Kremmer E."/>
            <person name="Eick D."/>
        </authorList>
    </citation>
    <scope>FUNCTION</scope>
    <scope>INTERACTION WITH BOP1 AND WDR12</scope>
</reference>
<reference key="12">
    <citation type="journal article" date="2007" name="Nucleic Acids Res.">
        <title>The BRCT domain of mammalian Pes1 is crucial for nucleolar localization and rRNA processing.</title>
        <authorList>
            <person name="Hoelzel M."/>
            <person name="Grimm T."/>
            <person name="Rohrmoser M."/>
            <person name="Malamoussi A."/>
            <person name="Harasim T."/>
            <person name="Gruber-Eber A."/>
            <person name="Kremmer E."/>
            <person name="Eick D."/>
        </authorList>
    </citation>
    <scope>FUNCTION</scope>
    <scope>INTERACTION WITH BOP1 AND WDR12</scope>
    <scope>SUBCELLULAR LOCATION</scope>
    <scope>MUTAGENESIS OF PHE-327; ILE-347; ARG-380 AND TRP-397</scope>
</reference>
<reference key="13">
    <citation type="journal article" date="2008" name="Proc. Natl. Acad. Sci. U.S.A.">
        <title>A quantitative atlas of mitotic phosphorylation.</title>
        <authorList>
            <person name="Dephoure N."/>
            <person name="Zhou C."/>
            <person name="Villen J."/>
            <person name="Beausoleil S.A."/>
            <person name="Bakalarski C.E."/>
            <person name="Elledge S.J."/>
            <person name="Gygi S.P."/>
        </authorList>
    </citation>
    <scope>IDENTIFICATION BY MASS SPECTROMETRY [LARGE SCALE ANALYSIS]</scope>
    <source>
        <tissue>Cervix carcinoma</tissue>
    </source>
</reference>
<reference key="14">
    <citation type="journal article" date="2009" name="Science">
        <title>Lysine acetylation targets protein complexes and co-regulates major cellular functions.</title>
        <authorList>
            <person name="Choudhary C."/>
            <person name="Kumar C."/>
            <person name="Gnad F."/>
            <person name="Nielsen M.L."/>
            <person name="Rehman M."/>
            <person name="Walther T.C."/>
            <person name="Olsen J.V."/>
            <person name="Mann M."/>
        </authorList>
    </citation>
    <scope>ACETYLATION [LARGE SCALE ANALYSIS] AT LYS-98</scope>
    <scope>IDENTIFICATION BY MASS SPECTROMETRY [LARGE SCALE ANALYSIS]</scope>
</reference>
<reference key="15">
    <citation type="journal article" date="2011" name="BMC Syst. Biol.">
        <title>Initial characterization of the human central proteome.</title>
        <authorList>
            <person name="Burkard T.R."/>
            <person name="Planyavsky M."/>
            <person name="Kaupe I."/>
            <person name="Breitwieser F.P."/>
            <person name="Buerckstuemmer T."/>
            <person name="Bennett K.L."/>
            <person name="Superti-Furga G."/>
            <person name="Colinge J."/>
        </authorList>
    </citation>
    <scope>IDENTIFICATION BY MASS SPECTROMETRY [LARGE SCALE ANALYSIS]</scope>
</reference>
<reference key="16">
    <citation type="journal article" date="2012" name="Proc. Natl. Acad. Sci. U.S.A.">
        <title>N-terminal acetylome analyses and functional insights of the N-terminal acetyltransferase NatB.</title>
        <authorList>
            <person name="Van Damme P."/>
            <person name="Lasa M."/>
            <person name="Polevoda B."/>
            <person name="Gazquez C."/>
            <person name="Elosegui-Artola A."/>
            <person name="Kim D.S."/>
            <person name="De Juan-Pardo E."/>
            <person name="Demeyer K."/>
            <person name="Hole K."/>
            <person name="Larrea E."/>
            <person name="Timmerman E."/>
            <person name="Prieto J."/>
            <person name="Arnesen T."/>
            <person name="Sherman F."/>
            <person name="Gevaert K."/>
            <person name="Aldabe R."/>
        </authorList>
    </citation>
    <scope>IDENTIFICATION BY MASS SPECTROMETRY [LARGE SCALE ANALYSIS]</scope>
</reference>
<reference key="17">
    <citation type="journal article" date="2014" name="Proc. Natl. Acad. Sci. U.S.A.">
        <title>Mapping of SUMO sites and analysis of SUMOylation changes induced by external stimuli.</title>
        <authorList>
            <person name="Impens F."/>
            <person name="Radoshevich L."/>
            <person name="Cossart P."/>
            <person name="Ribet D."/>
        </authorList>
    </citation>
    <scope>SUMOYLATION [LARGE SCALE ANALYSIS] AT LYS-517</scope>
    <scope>IDENTIFICATION BY MASS SPECTROMETRY [LARGE SCALE ANALYSIS]</scope>
</reference>
<reference key="18">
    <citation type="journal article" date="2017" name="Nat. Struct. Mol. Biol.">
        <title>Site-specific mapping of the human SUMO proteome reveals co-modification with phosphorylation.</title>
        <authorList>
            <person name="Hendriks I.A."/>
            <person name="Lyon D."/>
            <person name="Young C."/>
            <person name="Jensen L.J."/>
            <person name="Vertegaal A.C."/>
            <person name="Nielsen M.L."/>
        </authorList>
    </citation>
    <scope>SUMOYLATION [LARGE SCALE ANALYSIS] AT LYS-517</scope>
    <scope>IDENTIFICATION BY MASS SPECTROMETRY [LARGE SCALE ANALYSIS]</scope>
</reference>
<reference key="19">
    <citation type="submission" date="2007-10" db="PDB data bank">
        <title>Solution structure of the BRCT domain from human pescadillo homolog 1.</title>
        <authorList>
            <consortium name="RIKEN structural genomics initiative (RSGI)"/>
        </authorList>
    </citation>
    <scope>STRUCTURE BY NMR OF 322-414</scope>
</reference>
<reference key="20">
    <citation type="journal article" date="2015" name="Exp. Cell Res.">
        <title>DEAD-box helicase DDX27 regulates 3' end formation of ribosomal 47S RNA and stably associates with the PeBoW-complex.</title>
        <authorList>
            <person name="Kellner M."/>
            <person name="Rohrmoser M."/>
            <person name="Forne I."/>
            <person name="Voss K."/>
            <person name="Burger K."/>
            <person name="Muehl B."/>
            <person name="Gruber-Eber A."/>
            <person name="Kremmer E."/>
            <person name="Imhof A."/>
            <person name="Eick D."/>
        </authorList>
    </citation>
    <scope>INTERACTION WITH DDX27</scope>
</reference>
<name>PESC_HUMAN</name>